<accession>A1JIH9</accession>
<sequence>MSTITKDQILEGVAALSVMEIVELISAMEEKFGVSAAAVAAGPAAAAEAVEEQTEFNVVLASFGDNKVAVIKAVRGATGLGLKEAKDLVESAPAVLKEGVNKDEAESLKKSLEEAGAAVEIK</sequence>
<organism>
    <name type="scientific">Yersinia enterocolitica serotype O:8 / biotype 1B (strain NCTC 13174 / 8081)</name>
    <dbReference type="NCBI Taxonomy" id="393305"/>
    <lineage>
        <taxon>Bacteria</taxon>
        <taxon>Pseudomonadati</taxon>
        <taxon>Pseudomonadota</taxon>
        <taxon>Gammaproteobacteria</taxon>
        <taxon>Enterobacterales</taxon>
        <taxon>Yersiniaceae</taxon>
        <taxon>Yersinia</taxon>
    </lineage>
</organism>
<proteinExistence type="inferred from homology"/>
<comment type="function">
    <text evidence="1">Forms part of the ribosomal stalk which helps the ribosome interact with GTP-bound translation factors. Is thus essential for accurate translation.</text>
</comment>
<comment type="subunit">
    <text evidence="1">Homodimer. Part of the ribosomal stalk of the 50S ribosomal subunit. Forms a multimeric L10(L12)X complex, where L10 forms an elongated spine to which 2 to 4 L12 dimers bind in a sequential fashion. Binds GTP-bound translation factors.</text>
</comment>
<comment type="similarity">
    <text evidence="1">Belongs to the bacterial ribosomal protein bL12 family.</text>
</comment>
<gene>
    <name evidence="1" type="primary">rplL</name>
    <name type="ordered locus">YE0284</name>
</gene>
<keyword id="KW-0687">Ribonucleoprotein</keyword>
<keyword id="KW-0689">Ribosomal protein</keyword>
<dbReference type="EMBL" id="AM286415">
    <property type="protein sequence ID" value="CAL10417.1"/>
    <property type="molecule type" value="Genomic_DNA"/>
</dbReference>
<dbReference type="RefSeq" id="WP_011815381.1">
    <property type="nucleotide sequence ID" value="NC_008800.1"/>
</dbReference>
<dbReference type="RefSeq" id="YP_001004667.1">
    <property type="nucleotide sequence ID" value="NC_008800.1"/>
</dbReference>
<dbReference type="SMR" id="A1JIH9"/>
<dbReference type="KEGG" id="yen:YE0284"/>
<dbReference type="PATRIC" id="fig|393305.7.peg.377"/>
<dbReference type="eggNOG" id="COG0222">
    <property type="taxonomic scope" value="Bacteria"/>
</dbReference>
<dbReference type="HOGENOM" id="CLU_086499_3_2_6"/>
<dbReference type="OrthoDB" id="9811748at2"/>
<dbReference type="Proteomes" id="UP000000642">
    <property type="component" value="Chromosome"/>
</dbReference>
<dbReference type="GO" id="GO:0022625">
    <property type="term" value="C:cytosolic large ribosomal subunit"/>
    <property type="evidence" value="ECO:0007669"/>
    <property type="project" value="TreeGrafter"/>
</dbReference>
<dbReference type="GO" id="GO:0003729">
    <property type="term" value="F:mRNA binding"/>
    <property type="evidence" value="ECO:0007669"/>
    <property type="project" value="TreeGrafter"/>
</dbReference>
<dbReference type="GO" id="GO:0003735">
    <property type="term" value="F:structural constituent of ribosome"/>
    <property type="evidence" value="ECO:0007669"/>
    <property type="project" value="InterPro"/>
</dbReference>
<dbReference type="GO" id="GO:0006412">
    <property type="term" value="P:translation"/>
    <property type="evidence" value="ECO:0007669"/>
    <property type="project" value="UniProtKB-UniRule"/>
</dbReference>
<dbReference type="CDD" id="cd00387">
    <property type="entry name" value="Ribosomal_L7_L12"/>
    <property type="match status" value="1"/>
</dbReference>
<dbReference type="FunFam" id="3.30.1390.10:FF:000001">
    <property type="entry name" value="50S ribosomal protein L7/L12"/>
    <property type="match status" value="1"/>
</dbReference>
<dbReference type="Gene3D" id="3.30.1390.10">
    <property type="match status" value="1"/>
</dbReference>
<dbReference type="Gene3D" id="1.20.5.710">
    <property type="entry name" value="Single helix bin"/>
    <property type="match status" value="1"/>
</dbReference>
<dbReference type="HAMAP" id="MF_00368">
    <property type="entry name" value="Ribosomal_bL12"/>
    <property type="match status" value="1"/>
</dbReference>
<dbReference type="InterPro" id="IPR000206">
    <property type="entry name" value="Ribosomal_bL12"/>
</dbReference>
<dbReference type="InterPro" id="IPR013823">
    <property type="entry name" value="Ribosomal_bL12_C"/>
</dbReference>
<dbReference type="InterPro" id="IPR014719">
    <property type="entry name" value="Ribosomal_bL12_C/ClpS-like"/>
</dbReference>
<dbReference type="InterPro" id="IPR008932">
    <property type="entry name" value="Ribosomal_bL12_oligo"/>
</dbReference>
<dbReference type="InterPro" id="IPR036235">
    <property type="entry name" value="Ribosomal_bL12_oligo_N_sf"/>
</dbReference>
<dbReference type="NCBIfam" id="TIGR00855">
    <property type="entry name" value="L12"/>
    <property type="match status" value="1"/>
</dbReference>
<dbReference type="PANTHER" id="PTHR45987">
    <property type="entry name" value="39S RIBOSOMAL PROTEIN L12"/>
    <property type="match status" value="1"/>
</dbReference>
<dbReference type="PANTHER" id="PTHR45987:SF4">
    <property type="entry name" value="LARGE RIBOSOMAL SUBUNIT PROTEIN BL12M"/>
    <property type="match status" value="1"/>
</dbReference>
<dbReference type="Pfam" id="PF00542">
    <property type="entry name" value="Ribosomal_L12"/>
    <property type="match status" value="1"/>
</dbReference>
<dbReference type="Pfam" id="PF16320">
    <property type="entry name" value="Ribosomal_L12_N"/>
    <property type="match status" value="1"/>
</dbReference>
<dbReference type="SUPFAM" id="SSF54736">
    <property type="entry name" value="ClpS-like"/>
    <property type="match status" value="1"/>
</dbReference>
<dbReference type="SUPFAM" id="SSF48300">
    <property type="entry name" value="Ribosomal protein L7/12, oligomerisation (N-terminal) domain"/>
    <property type="match status" value="1"/>
</dbReference>
<feature type="chain" id="PRO_1000007111" description="Large ribosomal subunit protein bL12">
    <location>
        <begin position="1"/>
        <end position="122"/>
    </location>
</feature>
<evidence type="ECO:0000255" key="1">
    <source>
        <dbReference type="HAMAP-Rule" id="MF_00368"/>
    </source>
</evidence>
<evidence type="ECO:0000305" key="2"/>
<reference key="1">
    <citation type="journal article" date="2006" name="PLoS Genet.">
        <title>The complete genome sequence and comparative genome analysis of the high pathogenicity Yersinia enterocolitica strain 8081.</title>
        <authorList>
            <person name="Thomson N.R."/>
            <person name="Howard S."/>
            <person name="Wren B.W."/>
            <person name="Holden M.T.G."/>
            <person name="Crossman L."/>
            <person name="Challis G.L."/>
            <person name="Churcher C."/>
            <person name="Mungall K."/>
            <person name="Brooks K."/>
            <person name="Chillingworth T."/>
            <person name="Feltwell T."/>
            <person name="Abdellah Z."/>
            <person name="Hauser H."/>
            <person name="Jagels K."/>
            <person name="Maddison M."/>
            <person name="Moule S."/>
            <person name="Sanders M."/>
            <person name="Whitehead S."/>
            <person name="Quail M.A."/>
            <person name="Dougan G."/>
            <person name="Parkhill J."/>
            <person name="Prentice M.B."/>
        </authorList>
    </citation>
    <scope>NUCLEOTIDE SEQUENCE [LARGE SCALE GENOMIC DNA]</scope>
    <source>
        <strain>NCTC 13174 / 8081</strain>
    </source>
</reference>
<protein>
    <recommendedName>
        <fullName evidence="1">Large ribosomal subunit protein bL12</fullName>
    </recommendedName>
    <alternativeName>
        <fullName evidence="2">50S ribosomal protein L7/L12</fullName>
    </alternativeName>
</protein>
<name>RL7_YERE8</name>